<accession>Q3BSV3</accession>
<reference key="1">
    <citation type="journal article" date="2005" name="J. Bacteriol.">
        <title>Insights into genome plasticity and pathogenicity of the plant pathogenic Bacterium Xanthomonas campestris pv. vesicatoria revealed by the complete genome sequence.</title>
        <authorList>
            <person name="Thieme F."/>
            <person name="Koebnik R."/>
            <person name="Bekel T."/>
            <person name="Berger C."/>
            <person name="Boch J."/>
            <person name="Buettner D."/>
            <person name="Caldana C."/>
            <person name="Gaigalat L."/>
            <person name="Goesmann A."/>
            <person name="Kay S."/>
            <person name="Kirchner O."/>
            <person name="Lanz C."/>
            <person name="Linke B."/>
            <person name="McHardy A.C."/>
            <person name="Meyer F."/>
            <person name="Mittenhuber G."/>
            <person name="Nies D.H."/>
            <person name="Niesbach-Kloesgen U."/>
            <person name="Patschkowski T."/>
            <person name="Rueckert C."/>
            <person name="Rupp O."/>
            <person name="Schneiker S."/>
            <person name="Schuster S.C."/>
            <person name="Vorhoelter F.J."/>
            <person name="Weber E."/>
            <person name="Puehler A."/>
            <person name="Bonas U."/>
            <person name="Bartels D."/>
            <person name="Kaiser O."/>
        </authorList>
    </citation>
    <scope>NUCLEOTIDE SEQUENCE [LARGE SCALE GENOMIC DNA]</scope>
    <source>
        <strain>85-10</strain>
    </source>
</reference>
<feature type="chain" id="PRO_1000186788" description="Fe/S biogenesis protein NfuA">
    <location>
        <begin position="1"/>
        <end position="199"/>
    </location>
</feature>
<feature type="binding site" evidence="1">
    <location>
        <position position="151"/>
    </location>
    <ligand>
        <name>[4Fe-4S] cluster</name>
        <dbReference type="ChEBI" id="CHEBI:49883"/>
    </ligand>
</feature>
<feature type="binding site" evidence="1">
    <location>
        <position position="154"/>
    </location>
    <ligand>
        <name>[4Fe-4S] cluster</name>
        <dbReference type="ChEBI" id="CHEBI:49883"/>
    </ligand>
</feature>
<sequence length="199" mass="21158">MIQISDKAQTYFRKLIEREGVPGMGVRLSAVDAGTPRADARLEFAEPADLSGDEWAIDCDGFTLYVVAASVPWMDGAEIDYVTQSTGNQQLTIKAPKIKGEAPAESASMVERVRWVVENEINPQLASHGGRVAVQEVSADGVVLLRFGGGCHGCGMADVTLKQGIEKTLMGRVPGVTAVRDATDHATGDAPYIPRDSAA</sequence>
<gene>
    <name evidence="1" type="primary">nfuA</name>
    <name type="ordered locus">XCV2429</name>
</gene>
<dbReference type="EMBL" id="AM039952">
    <property type="protein sequence ID" value="CAJ24106.1"/>
    <property type="molecule type" value="Genomic_DNA"/>
</dbReference>
<dbReference type="RefSeq" id="WP_008575672.1">
    <property type="nucleotide sequence ID" value="NZ_CP017190.1"/>
</dbReference>
<dbReference type="SMR" id="Q3BSV3"/>
<dbReference type="STRING" id="456327.BJD11_10805"/>
<dbReference type="KEGG" id="xcv:XCV2429"/>
<dbReference type="eggNOG" id="COG0316">
    <property type="taxonomic scope" value="Bacteria"/>
</dbReference>
<dbReference type="eggNOG" id="COG0694">
    <property type="taxonomic scope" value="Bacteria"/>
</dbReference>
<dbReference type="HOGENOM" id="CLU_094569_0_0_6"/>
<dbReference type="Proteomes" id="UP000007069">
    <property type="component" value="Chromosome"/>
</dbReference>
<dbReference type="GO" id="GO:0051539">
    <property type="term" value="F:4 iron, 4 sulfur cluster binding"/>
    <property type="evidence" value="ECO:0007669"/>
    <property type="project" value="UniProtKB-UniRule"/>
</dbReference>
<dbReference type="GO" id="GO:0005506">
    <property type="term" value="F:iron ion binding"/>
    <property type="evidence" value="ECO:0007669"/>
    <property type="project" value="InterPro"/>
</dbReference>
<dbReference type="GO" id="GO:0016226">
    <property type="term" value="P:iron-sulfur cluster assembly"/>
    <property type="evidence" value="ECO:0007669"/>
    <property type="project" value="UniProtKB-UniRule"/>
</dbReference>
<dbReference type="GO" id="GO:0051604">
    <property type="term" value="P:protein maturation"/>
    <property type="evidence" value="ECO:0007669"/>
    <property type="project" value="UniProtKB-UniRule"/>
</dbReference>
<dbReference type="Gene3D" id="3.30.300.130">
    <property type="entry name" value="Fe-S cluster assembly (FSCA)"/>
    <property type="match status" value="1"/>
</dbReference>
<dbReference type="Gene3D" id="2.60.300.12">
    <property type="entry name" value="HesB-like domain"/>
    <property type="match status" value="1"/>
</dbReference>
<dbReference type="HAMAP" id="MF_01637">
    <property type="entry name" value="Fe_S_biogen_NfuA"/>
    <property type="match status" value="1"/>
</dbReference>
<dbReference type="InterPro" id="IPR017726">
    <property type="entry name" value="Fe/S_biogenesis_protein_NfuA"/>
</dbReference>
<dbReference type="InterPro" id="IPR034904">
    <property type="entry name" value="FSCA_dom_sf"/>
</dbReference>
<dbReference type="InterPro" id="IPR035903">
    <property type="entry name" value="HesB-like_dom_sf"/>
</dbReference>
<dbReference type="InterPro" id="IPR001075">
    <property type="entry name" value="NIF_FeS_clus_asmbl_NifU_C"/>
</dbReference>
<dbReference type="PANTHER" id="PTHR11178:SF51">
    <property type="entry name" value="FE_S BIOGENESIS PROTEIN NFUA"/>
    <property type="match status" value="1"/>
</dbReference>
<dbReference type="PANTHER" id="PTHR11178">
    <property type="entry name" value="IRON-SULFUR CLUSTER SCAFFOLD PROTEIN NFU-RELATED"/>
    <property type="match status" value="1"/>
</dbReference>
<dbReference type="Pfam" id="PF01106">
    <property type="entry name" value="NifU"/>
    <property type="match status" value="1"/>
</dbReference>
<dbReference type="SUPFAM" id="SSF117916">
    <property type="entry name" value="Fe-S cluster assembly (FSCA) domain-like"/>
    <property type="match status" value="1"/>
</dbReference>
<dbReference type="SUPFAM" id="SSF89360">
    <property type="entry name" value="HesB-like domain"/>
    <property type="match status" value="1"/>
</dbReference>
<name>NFUA_XANE5</name>
<keyword id="KW-0004">4Fe-4S</keyword>
<keyword id="KW-0408">Iron</keyword>
<keyword id="KW-0411">Iron-sulfur</keyword>
<keyword id="KW-0479">Metal-binding</keyword>
<comment type="function">
    <text evidence="1">Involved in iron-sulfur cluster biogenesis. Binds a 4Fe-4S cluster, can transfer this cluster to apoproteins, and thereby intervenes in the maturation of Fe/S proteins. Could also act as a scaffold/chaperone for damaged Fe/S proteins.</text>
</comment>
<comment type="cofactor">
    <cofactor evidence="1">
        <name>[4Fe-4S] cluster</name>
        <dbReference type="ChEBI" id="CHEBI:49883"/>
    </cofactor>
    <text evidence="1">Binds 1 [4Fe-4S] cluster per subunit. The cluster is presumably bound at the interface of two monomers.</text>
</comment>
<comment type="subunit">
    <text evidence="1">Homodimer.</text>
</comment>
<comment type="similarity">
    <text evidence="1">Belongs to the NfuA family.</text>
</comment>
<evidence type="ECO:0000255" key="1">
    <source>
        <dbReference type="HAMAP-Rule" id="MF_01637"/>
    </source>
</evidence>
<organism>
    <name type="scientific">Xanthomonas euvesicatoria pv. vesicatoria (strain 85-10)</name>
    <name type="common">Xanthomonas campestris pv. vesicatoria</name>
    <dbReference type="NCBI Taxonomy" id="316273"/>
    <lineage>
        <taxon>Bacteria</taxon>
        <taxon>Pseudomonadati</taxon>
        <taxon>Pseudomonadota</taxon>
        <taxon>Gammaproteobacteria</taxon>
        <taxon>Lysobacterales</taxon>
        <taxon>Lysobacteraceae</taxon>
        <taxon>Xanthomonas</taxon>
    </lineage>
</organism>
<proteinExistence type="inferred from homology"/>
<protein>
    <recommendedName>
        <fullName evidence="1">Fe/S biogenesis protein NfuA</fullName>
    </recommendedName>
</protein>